<comment type="subunit">
    <text evidence="1">Heterodimer of a B chain and an A chain linked by two disulfide bonds.</text>
</comment>
<comment type="subcellular location">
    <subcellularLocation>
        <location>Secreted</location>
    </subcellularLocation>
</comment>
<comment type="similarity">
    <text evidence="3">Belongs to the insulin family.</text>
</comment>
<proteinExistence type="inferred from homology"/>
<gene>
    <name type="primary">BBXG1</name>
</gene>
<accession>O61271</accession>
<protein>
    <recommendedName>
        <fullName>Bombyxin G-1</fullName>
        <shortName>BBX-G1</shortName>
    </recommendedName>
    <component>
        <recommendedName>
            <fullName>Bombyxin G-1 B chain</fullName>
        </recommendedName>
    </component>
    <component>
        <recommendedName>
            <fullName>Bombyxin G-1 A chain</fullName>
        </recommendedName>
    </component>
</protein>
<feature type="signal peptide" evidence="2">
    <location>
        <begin position="1"/>
        <end position="19"/>
    </location>
</feature>
<feature type="peptide" id="PRO_0000016040" description="Bombyxin G-1 B chain">
    <location>
        <begin position="20"/>
        <end position="46"/>
    </location>
</feature>
<feature type="propeptide" id="PRO_0000016041" description="C peptide like">
    <location>
        <begin position="49"/>
        <end position="67"/>
    </location>
</feature>
<feature type="peptide" id="PRO_0000016042" description="Bombyxin G-1 A chain">
    <location>
        <begin position="70"/>
        <end position="90"/>
    </location>
</feature>
<feature type="disulfide bond" description="Interchain (between B and A chains)" evidence="1">
    <location>
        <begin position="28"/>
        <end position="77"/>
    </location>
</feature>
<feature type="disulfide bond" description="Interchain (between B and A chains)" evidence="1">
    <location>
        <begin position="40"/>
        <end position="90"/>
    </location>
</feature>
<feature type="disulfide bond" evidence="1">
    <location>
        <begin position="76"/>
        <end position="81"/>
    </location>
</feature>
<keyword id="KW-0165">Cleavage on pair of basic residues</keyword>
<keyword id="KW-1015">Disulfide bond</keyword>
<keyword id="KW-0372">Hormone</keyword>
<keyword id="KW-1185">Reference proteome</keyword>
<keyword id="KW-0964">Secreted</keyword>
<keyword id="KW-0732">Signal</keyword>
<name>BXG1_BOMMO</name>
<evidence type="ECO:0000250" key="1"/>
<evidence type="ECO:0000255" key="2"/>
<evidence type="ECO:0000305" key="3"/>
<dbReference type="EMBL" id="AB010380">
    <property type="protein sequence ID" value="BAA25679.1"/>
    <property type="molecule type" value="Genomic_DNA"/>
</dbReference>
<dbReference type="EMBL" id="AB010381">
    <property type="protein sequence ID" value="BAA31431.1"/>
    <property type="molecule type" value="Genomic_DNA"/>
</dbReference>
<dbReference type="RefSeq" id="NP_001121634.1">
    <property type="nucleotide sequence ID" value="NM_001128162.1"/>
</dbReference>
<dbReference type="PaxDb" id="7091-BGIBMGA011972-TA"/>
<dbReference type="EnsemblMetazoa" id="NM_001128162.1">
    <property type="protein sequence ID" value="NP_001121634.1"/>
    <property type="gene ID" value="GeneID_100169726"/>
</dbReference>
<dbReference type="GeneID" id="100169726"/>
<dbReference type="KEGG" id="bmor:100169726"/>
<dbReference type="CTD" id="100169726"/>
<dbReference type="eggNOG" id="ENOG502SESX">
    <property type="taxonomic scope" value="Eukaryota"/>
</dbReference>
<dbReference type="HOGENOM" id="CLU_125164_2_0_1"/>
<dbReference type="InParanoid" id="O61271"/>
<dbReference type="OMA" id="WLWISSN"/>
<dbReference type="OrthoDB" id="493443at7088"/>
<dbReference type="Proteomes" id="UP000005204">
    <property type="component" value="Unassembled WGS sequence"/>
</dbReference>
<dbReference type="GO" id="GO:0005615">
    <property type="term" value="C:extracellular space"/>
    <property type="evidence" value="ECO:0007669"/>
    <property type="project" value="InterPro"/>
</dbReference>
<dbReference type="GO" id="GO:0008083">
    <property type="term" value="F:growth factor activity"/>
    <property type="evidence" value="ECO:0007669"/>
    <property type="project" value="InterPro"/>
</dbReference>
<dbReference type="GO" id="GO:0005179">
    <property type="term" value="F:hormone activity"/>
    <property type="evidence" value="ECO:0007669"/>
    <property type="project" value="UniProtKB-KW"/>
</dbReference>
<dbReference type="CDD" id="cd04366">
    <property type="entry name" value="IlGF_insulin_bombyxin_like"/>
    <property type="match status" value="1"/>
</dbReference>
<dbReference type="Gene3D" id="1.10.100.10">
    <property type="entry name" value="Insulin-like"/>
    <property type="match status" value="1"/>
</dbReference>
<dbReference type="InterPro" id="IPR017097">
    <property type="entry name" value="Bombyxin"/>
</dbReference>
<dbReference type="InterPro" id="IPR016179">
    <property type="entry name" value="Insulin-like"/>
</dbReference>
<dbReference type="InterPro" id="IPR036438">
    <property type="entry name" value="Insulin-like_sf"/>
</dbReference>
<dbReference type="InterPro" id="IPR022353">
    <property type="entry name" value="Insulin_CS"/>
</dbReference>
<dbReference type="InterPro" id="IPR022352">
    <property type="entry name" value="Insulin_family"/>
</dbReference>
<dbReference type="Pfam" id="PF00049">
    <property type="entry name" value="Insulin"/>
    <property type="match status" value="1"/>
</dbReference>
<dbReference type="PIRSF" id="PIRSF037038">
    <property type="entry name" value="Bombyxin"/>
    <property type="match status" value="1"/>
</dbReference>
<dbReference type="PRINTS" id="PR00276">
    <property type="entry name" value="INSULINFAMLY"/>
</dbReference>
<dbReference type="SMART" id="SM00078">
    <property type="entry name" value="IlGF"/>
    <property type="match status" value="1"/>
</dbReference>
<dbReference type="SUPFAM" id="SSF56994">
    <property type="entry name" value="Insulin-like"/>
    <property type="match status" value="1"/>
</dbReference>
<dbReference type="PROSITE" id="PS00262">
    <property type="entry name" value="INSULIN"/>
    <property type="match status" value="1"/>
</dbReference>
<sequence>MKLIIFVVFCITIYGSTSGQQEVARRYCGRHLAVTMADLCFGVQFDKRNTQYEGYHWPLLAYSEERIKRQGIADECCLVPCTTNVLSSYC</sequence>
<reference key="1">
    <citation type="journal article" date="1998" name="Dev. Genes Evol.">
        <title>A novel member of the bombyxin gene family: structure and expression of bombyxin G1 gene, an insulin-related peptide gene of the silkmoth Bombyx mori.</title>
        <authorList>
            <person name="Yoshida I."/>
            <person name="Moto K."/>
            <person name="Sakurai S."/>
            <person name="Iwami M."/>
        </authorList>
    </citation>
    <scope>NUCLEOTIDE SEQUENCE [GENOMIC DNA]</scope>
    <source>
        <strain>Kinshu</strain>
        <strain>Showa</strain>
    </source>
</reference>
<organism>
    <name type="scientific">Bombyx mori</name>
    <name type="common">Silk moth</name>
    <dbReference type="NCBI Taxonomy" id="7091"/>
    <lineage>
        <taxon>Eukaryota</taxon>
        <taxon>Metazoa</taxon>
        <taxon>Ecdysozoa</taxon>
        <taxon>Arthropoda</taxon>
        <taxon>Hexapoda</taxon>
        <taxon>Insecta</taxon>
        <taxon>Pterygota</taxon>
        <taxon>Neoptera</taxon>
        <taxon>Endopterygota</taxon>
        <taxon>Lepidoptera</taxon>
        <taxon>Glossata</taxon>
        <taxon>Ditrysia</taxon>
        <taxon>Bombycoidea</taxon>
        <taxon>Bombycidae</taxon>
        <taxon>Bombycinae</taxon>
        <taxon>Bombyx</taxon>
    </lineage>
</organism>